<accession>Q9M2V6</accession>
<reference key="1">
    <citation type="journal article" date="2000" name="Nature">
        <title>Sequence and analysis of chromosome 3 of the plant Arabidopsis thaliana.</title>
        <authorList>
            <person name="Salanoubat M."/>
            <person name="Lemcke K."/>
            <person name="Rieger M."/>
            <person name="Ansorge W."/>
            <person name="Unseld M."/>
            <person name="Fartmann B."/>
            <person name="Valle G."/>
            <person name="Bloecker H."/>
            <person name="Perez-Alonso M."/>
            <person name="Obermaier B."/>
            <person name="Delseny M."/>
            <person name="Boutry M."/>
            <person name="Grivell L.A."/>
            <person name="Mache R."/>
            <person name="Puigdomenech P."/>
            <person name="De Simone V."/>
            <person name="Choisne N."/>
            <person name="Artiguenave F."/>
            <person name="Robert C."/>
            <person name="Brottier P."/>
            <person name="Wincker P."/>
            <person name="Cattolico L."/>
            <person name="Weissenbach J."/>
            <person name="Saurin W."/>
            <person name="Quetier F."/>
            <person name="Schaefer M."/>
            <person name="Mueller-Auer S."/>
            <person name="Gabel C."/>
            <person name="Fuchs M."/>
            <person name="Benes V."/>
            <person name="Wurmbach E."/>
            <person name="Drzonek H."/>
            <person name="Erfle H."/>
            <person name="Jordan N."/>
            <person name="Bangert S."/>
            <person name="Wiedelmann R."/>
            <person name="Kranz H."/>
            <person name="Voss H."/>
            <person name="Holland R."/>
            <person name="Brandt P."/>
            <person name="Nyakatura G."/>
            <person name="Vezzi A."/>
            <person name="D'Angelo M."/>
            <person name="Pallavicini A."/>
            <person name="Toppo S."/>
            <person name="Simionati B."/>
            <person name="Conrad A."/>
            <person name="Hornischer K."/>
            <person name="Kauer G."/>
            <person name="Loehnert T.-H."/>
            <person name="Nordsiek G."/>
            <person name="Reichelt J."/>
            <person name="Scharfe M."/>
            <person name="Schoen O."/>
            <person name="Bargues M."/>
            <person name="Terol J."/>
            <person name="Climent J."/>
            <person name="Navarro P."/>
            <person name="Collado C."/>
            <person name="Perez-Perez A."/>
            <person name="Ottenwaelder B."/>
            <person name="Duchemin D."/>
            <person name="Cooke R."/>
            <person name="Laudie M."/>
            <person name="Berger-Llauro C."/>
            <person name="Purnelle B."/>
            <person name="Masuy D."/>
            <person name="de Haan M."/>
            <person name="Maarse A.C."/>
            <person name="Alcaraz J.-P."/>
            <person name="Cottet A."/>
            <person name="Casacuberta E."/>
            <person name="Monfort A."/>
            <person name="Argiriou A."/>
            <person name="Flores M."/>
            <person name="Liguori R."/>
            <person name="Vitale D."/>
            <person name="Mannhaupt G."/>
            <person name="Haase D."/>
            <person name="Schoof H."/>
            <person name="Rudd S."/>
            <person name="Zaccaria P."/>
            <person name="Mewes H.-W."/>
            <person name="Mayer K.F.X."/>
            <person name="Kaul S."/>
            <person name="Town C.D."/>
            <person name="Koo H.L."/>
            <person name="Tallon L.J."/>
            <person name="Jenkins J."/>
            <person name="Rooney T."/>
            <person name="Rizzo M."/>
            <person name="Walts A."/>
            <person name="Utterback T."/>
            <person name="Fujii C.Y."/>
            <person name="Shea T.P."/>
            <person name="Creasy T.H."/>
            <person name="Haas B."/>
            <person name="Maiti R."/>
            <person name="Wu D."/>
            <person name="Peterson J."/>
            <person name="Van Aken S."/>
            <person name="Pai G."/>
            <person name="Militscher J."/>
            <person name="Sellers P."/>
            <person name="Gill J.E."/>
            <person name="Feldblyum T.V."/>
            <person name="Preuss D."/>
            <person name="Lin X."/>
            <person name="Nierman W.C."/>
            <person name="Salzberg S.L."/>
            <person name="White O."/>
            <person name="Venter J.C."/>
            <person name="Fraser C.M."/>
            <person name="Kaneko T."/>
            <person name="Nakamura Y."/>
            <person name="Sato S."/>
            <person name="Kato T."/>
            <person name="Asamizu E."/>
            <person name="Sasamoto S."/>
            <person name="Kimura T."/>
            <person name="Idesawa K."/>
            <person name="Kawashima K."/>
            <person name="Kishida Y."/>
            <person name="Kiyokawa C."/>
            <person name="Kohara M."/>
            <person name="Matsumoto M."/>
            <person name="Matsuno A."/>
            <person name="Muraki A."/>
            <person name="Nakayama S."/>
            <person name="Nakazaki N."/>
            <person name="Shinpo S."/>
            <person name="Takeuchi C."/>
            <person name="Wada T."/>
            <person name="Watanabe A."/>
            <person name="Yamada M."/>
            <person name="Yasuda M."/>
            <person name="Tabata S."/>
        </authorList>
    </citation>
    <scope>NUCLEOTIDE SEQUENCE [LARGE SCALE GENOMIC DNA]</scope>
    <source>
        <strain>cv. Columbia</strain>
    </source>
</reference>
<reference key="2">
    <citation type="journal article" date="2017" name="Plant J.">
        <title>Araport11: a complete reannotation of the Arabidopsis thaliana reference genome.</title>
        <authorList>
            <person name="Cheng C.Y."/>
            <person name="Krishnakumar V."/>
            <person name="Chan A.P."/>
            <person name="Thibaud-Nissen F."/>
            <person name="Schobel S."/>
            <person name="Town C.D."/>
        </authorList>
    </citation>
    <scope>GENOME REANNOTATION</scope>
    <source>
        <strain>cv. Columbia</strain>
    </source>
</reference>
<reference key="3">
    <citation type="journal article" date="2001" name="J. Biol. Chem.">
        <title>The Arabidopsis thaliana ABC protein superfamily, a complete inventory.</title>
        <authorList>
            <person name="Sanchez-Fernandez R."/>
            <person name="Davies T.G."/>
            <person name="Coleman J.O."/>
            <person name="Rea P.A."/>
        </authorList>
    </citation>
    <scope>GENE FAMILY</scope>
    <scope>NOMENCLATURE</scope>
</reference>
<reference key="4">
    <citation type="journal article" date="2008" name="Trends Plant Sci.">
        <title>Plant ABC proteins - a unified nomenclature and updated inventory.</title>
        <authorList>
            <person name="Verrier P.J."/>
            <person name="Bird D."/>
            <person name="Burla B."/>
            <person name="Dassa E."/>
            <person name="Forestier C."/>
            <person name="Geisler M."/>
            <person name="Klein M."/>
            <person name="Kolukisaoglu H.U."/>
            <person name="Lee Y."/>
            <person name="Martinoia E."/>
            <person name="Murphy A."/>
            <person name="Rea P.A."/>
            <person name="Samuels L."/>
            <person name="Schulz B."/>
            <person name="Spalding E.J."/>
            <person name="Yazaki K."/>
            <person name="Theodoulou F.L."/>
        </authorList>
    </citation>
    <scope>GENE FAMILY</scope>
    <scope>NOMENCLATURE</scope>
</reference>
<comment type="subcellular location">
    <subcellularLocation>
        <location evidence="1">Membrane</location>
        <topology evidence="1">Multi-pass membrane protein</topology>
    </subcellularLocation>
</comment>
<comment type="similarity">
    <text evidence="4">Belongs to the ABC transporter superfamily. ABCG family. Eye pigment precursor importer (TC 3.A.1.204) subfamily.</text>
</comment>
<evidence type="ECO:0000250" key="1"/>
<evidence type="ECO:0000255" key="2"/>
<evidence type="ECO:0000255" key="3">
    <source>
        <dbReference type="PROSITE-ProRule" id="PRU00434"/>
    </source>
</evidence>
<evidence type="ECO:0000305" key="4"/>
<protein>
    <recommendedName>
        <fullName>ABC transporter G family member 17</fullName>
        <shortName>ABC transporter ABCG.17</shortName>
        <shortName>AtABCG17</shortName>
    </recommendedName>
    <alternativeName>
        <fullName>Probable white-brown complex homolog protein 17</fullName>
        <shortName>AtWBC17</shortName>
    </alternativeName>
</protein>
<organism>
    <name type="scientific">Arabidopsis thaliana</name>
    <name type="common">Mouse-ear cress</name>
    <dbReference type="NCBI Taxonomy" id="3702"/>
    <lineage>
        <taxon>Eukaryota</taxon>
        <taxon>Viridiplantae</taxon>
        <taxon>Streptophyta</taxon>
        <taxon>Embryophyta</taxon>
        <taxon>Tracheophyta</taxon>
        <taxon>Spermatophyta</taxon>
        <taxon>Magnoliopsida</taxon>
        <taxon>eudicotyledons</taxon>
        <taxon>Gunneridae</taxon>
        <taxon>Pentapetalae</taxon>
        <taxon>rosids</taxon>
        <taxon>malvids</taxon>
        <taxon>Brassicales</taxon>
        <taxon>Brassicaceae</taxon>
        <taxon>Camelineae</taxon>
        <taxon>Arabidopsis</taxon>
    </lineage>
</organism>
<dbReference type="EMBL" id="AL132970">
    <property type="protein sequence ID" value="CAB82705.1"/>
    <property type="molecule type" value="Genomic_DNA"/>
</dbReference>
<dbReference type="EMBL" id="CP002686">
    <property type="protein sequence ID" value="AEE79340.1"/>
    <property type="molecule type" value="Genomic_DNA"/>
</dbReference>
<dbReference type="EMBL" id="CP002686">
    <property type="protein sequence ID" value="ANM63739.1"/>
    <property type="molecule type" value="Genomic_DNA"/>
</dbReference>
<dbReference type="PIR" id="T47649">
    <property type="entry name" value="T47649"/>
</dbReference>
<dbReference type="RefSeq" id="NP_001319754.1">
    <property type="nucleotide sequence ID" value="NM_001339720.1"/>
</dbReference>
<dbReference type="RefSeq" id="NP_191070.1">
    <property type="nucleotide sequence ID" value="NM_115368.2"/>
</dbReference>
<dbReference type="SMR" id="Q9M2V6"/>
<dbReference type="FunCoup" id="Q9M2V6">
    <property type="interactions" value="66"/>
</dbReference>
<dbReference type="STRING" id="3702.Q9M2V6"/>
<dbReference type="iPTMnet" id="Q9M2V6"/>
<dbReference type="PaxDb" id="3702-AT3G55100.1"/>
<dbReference type="ProteomicsDB" id="244596"/>
<dbReference type="EnsemblPlants" id="AT3G55100.1">
    <property type="protein sequence ID" value="AT3G55100.1"/>
    <property type="gene ID" value="AT3G55100"/>
</dbReference>
<dbReference type="EnsemblPlants" id="AT3G55100.2">
    <property type="protein sequence ID" value="AT3G55100.2"/>
    <property type="gene ID" value="AT3G55100"/>
</dbReference>
<dbReference type="GeneID" id="824676"/>
<dbReference type="Gramene" id="AT3G55100.1">
    <property type="protein sequence ID" value="AT3G55100.1"/>
    <property type="gene ID" value="AT3G55100"/>
</dbReference>
<dbReference type="Gramene" id="AT3G55100.2">
    <property type="protein sequence ID" value="AT3G55100.2"/>
    <property type="gene ID" value="AT3G55100"/>
</dbReference>
<dbReference type="KEGG" id="ath:AT3G55100"/>
<dbReference type="Araport" id="AT3G55100"/>
<dbReference type="TAIR" id="AT3G55100">
    <property type="gene designation" value="ABCG17"/>
</dbReference>
<dbReference type="eggNOG" id="KOG0061">
    <property type="taxonomic scope" value="Eukaryota"/>
</dbReference>
<dbReference type="HOGENOM" id="CLU_000604_57_8_1"/>
<dbReference type="InParanoid" id="Q9M2V6"/>
<dbReference type="OMA" id="CFVRGNQ"/>
<dbReference type="OrthoDB" id="66620at2759"/>
<dbReference type="PhylomeDB" id="Q9M2V6"/>
<dbReference type="PRO" id="PR:Q9M2V6"/>
<dbReference type="Proteomes" id="UP000006548">
    <property type="component" value="Chromosome 3"/>
</dbReference>
<dbReference type="ExpressionAtlas" id="Q9M2V6">
    <property type="expression patterns" value="baseline and differential"/>
</dbReference>
<dbReference type="GO" id="GO:0016020">
    <property type="term" value="C:membrane"/>
    <property type="evidence" value="ECO:0007669"/>
    <property type="project" value="UniProtKB-SubCell"/>
</dbReference>
<dbReference type="GO" id="GO:0140359">
    <property type="term" value="F:ABC-type transporter activity"/>
    <property type="evidence" value="ECO:0007669"/>
    <property type="project" value="InterPro"/>
</dbReference>
<dbReference type="GO" id="GO:0005524">
    <property type="term" value="F:ATP binding"/>
    <property type="evidence" value="ECO:0007669"/>
    <property type="project" value="UniProtKB-KW"/>
</dbReference>
<dbReference type="GO" id="GO:0016887">
    <property type="term" value="F:ATP hydrolysis activity"/>
    <property type="evidence" value="ECO:0007669"/>
    <property type="project" value="InterPro"/>
</dbReference>
<dbReference type="FunFam" id="3.40.50.300:FF:000530">
    <property type="entry name" value="ABC transporter G family member 6"/>
    <property type="match status" value="1"/>
</dbReference>
<dbReference type="Gene3D" id="3.40.50.300">
    <property type="entry name" value="P-loop containing nucleotide triphosphate hydrolases"/>
    <property type="match status" value="1"/>
</dbReference>
<dbReference type="InterPro" id="IPR003593">
    <property type="entry name" value="AAA+_ATPase"/>
</dbReference>
<dbReference type="InterPro" id="IPR013525">
    <property type="entry name" value="ABC2_TM"/>
</dbReference>
<dbReference type="InterPro" id="IPR003439">
    <property type="entry name" value="ABC_transporter-like_ATP-bd"/>
</dbReference>
<dbReference type="InterPro" id="IPR017871">
    <property type="entry name" value="ABC_transporter-like_CS"/>
</dbReference>
<dbReference type="InterPro" id="IPR050352">
    <property type="entry name" value="ABCG_transporters"/>
</dbReference>
<dbReference type="InterPro" id="IPR027417">
    <property type="entry name" value="P-loop_NTPase"/>
</dbReference>
<dbReference type="PANTHER" id="PTHR48041:SF69">
    <property type="entry name" value="ABC TRANSPORTER G FAMILY MEMBER 17-RELATED"/>
    <property type="match status" value="1"/>
</dbReference>
<dbReference type="PANTHER" id="PTHR48041">
    <property type="entry name" value="ABC TRANSPORTER G FAMILY MEMBER 28"/>
    <property type="match status" value="1"/>
</dbReference>
<dbReference type="Pfam" id="PF01061">
    <property type="entry name" value="ABC2_membrane"/>
    <property type="match status" value="1"/>
</dbReference>
<dbReference type="Pfam" id="PF00005">
    <property type="entry name" value="ABC_tran"/>
    <property type="match status" value="1"/>
</dbReference>
<dbReference type="SMART" id="SM00382">
    <property type="entry name" value="AAA"/>
    <property type="match status" value="1"/>
</dbReference>
<dbReference type="SUPFAM" id="SSF52540">
    <property type="entry name" value="P-loop containing nucleoside triphosphate hydrolases"/>
    <property type="match status" value="1"/>
</dbReference>
<dbReference type="PROSITE" id="PS00211">
    <property type="entry name" value="ABC_TRANSPORTER_1"/>
    <property type="match status" value="1"/>
</dbReference>
<dbReference type="PROSITE" id="PS50893">
    <property type="entry name" value="ABC_TRANSPORTER_2"/>
    <property type="match status" value="1"/>
</dbReference>
<sequence length="662" mass="74383">MLQRDAVIDVDESEIPPIPFVLAFNDLTYNVTLQQRFGLRFGHSPAKIKTLLNGITGEAKEGEILAILGASGAGKSTLIDALAGQIAEGSLKGTVTLNGEALQSRLLRVISAYVMQEDLLFPMLTVEETLMFAAEFRLPRSLSKSKKRNRVETLIDQLGLTTVKNTVIGDEGHRGVSGGERRRVSIGTDIIHDPIVLFLDEPTSGLDSTSAFMVVQVLKKIARSGSIVIMSIHQPSGRIMEFLDRVIVLSSGQIVFSDSPATLPLFFSEFGSPIPEKENIAEFTLDLIKDLEGSPEGTRGLVEFNRNWQHRKLRVSQEPHHNSSSLGEAINASISRGKLVSTSYRSIPSYVNPWWVETVILAKRYMINWTRTPELIGTRVFIVMMTGFLLATVYWKVDDSPRGVQERLSFFSFAMATMFYSCADGLPAFIQERYIFLRETAHNAYRRSSYVISHSLVTLPHLFALSIGFAATTFWFVGLNGGLAGFIYYLMIIFASFWSGCSFVTFVSGVIPNVMMSYMVTFGYLSYCLLFSGFYVNRDRIHLYWIWIHYISLLKYPYEAVLHNEFDDPSRCFVRGNQVFDNTIMEGVSETTKAKLLETMSGYLGMELTESTCLTTGSDLLKQHGIEQLDKWGCLWVTLAWGFFFRILFYFSLLLGSKNKRA</sequence>
<gene>
    <name type="primary">ABCG17</name>
    <name type="synonym">WBC17</name>
    <name type="ordered locus">At3g55100</name>
    <name type="ORF">T15C9.100</name>
</gene>
<name>AB17G_ARATH</name>
<feature type="chain" id="PRO_0000240689" description="ABC transporter G family member 17">
    <location>
        <begin position="1"/>
        <end position="662"/>
    </location>
</feature>
<feature type="transmembrane region" description="Helical" evidence="2">
    <location>
        <begin position="375"/>
        <end position="395"/>
    </location>
</feature>
<feature type="transmembrane region" description="Helical" evidence="2">
    <location>
        <begin position="410"/>
        <end position="430"/>
    </location>
</feature>
<feature type="transmembrane region" description="Helical" evidence="2">
    <location>
        <begin position="451"/>
        <end position="471"/>
    </location>
</feature>
<feature type="transmembrane region" description="Helical" evidence="2">
    <location>
        <begin position="486"/>
        <end position="508"/>
    </location>
</feature>
<feature type="transmembrane region" description="Helical" evidence="2">
    <location>
        <begin position="514"/>
        <end position="536"/>
    </location>
</feature>
<feature type="transmembrane region" description="Helical" evidence="2">
    <location>
        <begin position="635"/>
        <end position="655"/>
    </location>
</feature>
<feature type="domain" description="ABC transporter" evidence="3">
    <location>
        <begin position="22"/>
        <end position="276"/>
    </location>
</feature>
<feature type="domain" description="ABC transmembrane type-2">
    <location>
        <begin position="356"/>
        <end position="566"/>
    </location>
</feature>
<feature type="binding site" evidence="3">
    <location>
        <begin position="69"/>
        <end position="76"/>
    </location>
    <ligand>
        <name>ATP</name>
        <dbReference type="ChEBI" id="CHEBI:30616"/>
    </ligand>
</feature>
<keyword id="KW-0067">ATP-binding</keyword>
<keyword id="KW-0472">Membrane</keyword>
<keyword id="KW-0547">Nucleotide-binding</keyword>
<keyword id="KW-1185">Reference proteome</keyword>
<keyword id="KW-0812">Transmembrane</keyword>
<keyword id="KW-1133">Transmembrane helix</keyword>
<keyword id="KW-0813">Transport</keyword>
<proteinExistence type="evidence at transcript level"/>